<dbReference type="EMBL" id="CP000849">
    <property type="protein sequence ID" value="ABV78694.1"/>
    <property type="molecule type" value="Genomic_DNA"/>
</dbReference>
<dbReference type="RefSeq" id="WP_011477813.1">
    <property type="nucleotide sequence ID" value="NC_009883.1"/>
</dbReference>
<dbReference type="SMR" id="A8GV23"/>
<dbReference type="KEGG" id="rbo:A1I_01510"/>
<dbReference type="HOGENOM" id="CLU_086499_3_0_5"/>
<dbReference type="GO" id="GO:0005737">
    <property type="term" value="C:cytoplasm"/>
    <property type="evidence" value="ECO:0007669"/>
    <property type="project" value="UniProtKB-ARBA"/>
</dbReference>
<dbReference type="GO" id="GO:1990904">
    <property type="term" value="C:ribonucleoprotein complex"/>
    <property type="evidence" value="ECO:0007669"/>
    <property type="project" value="UniProtKB-KW"/>
</dbReference>
<dbReference type="GO" id="GO:0005840">
    <property type="term" value="C:ribosome"/>
    <property type="evidence" value="ECO:0007669"/>
    <property type="project" value="UniProtKB-KW"/>
</dbReference>
<dbReference type="GO" id="GO:0003729">
    <property type="term" value="F:mRNA binding"/>
    <property type="evidence" value="ECO:0007669"/>
    <property type="project" value="TreeGrafter"/>
</dbReference>
<dbReference type="GO" id="GO:0003735">
    <property type="term" value="F:structural constituent of ribosome"/>
    <property type="evidence" value="ECO:0007669"/>
    <property type="project" value="InterPro"/>
</dbReference>
<dbReference type="GO" id="GO:0006412">
    <property type="term" value="P:translation"/>
    <property type="evidence" value="ECO:0007669"/>
    <property type="project" value="UniProtKB-UniRule"/>
</dbReference>
<dbReference type="CDD" id="cd00387">
    <property type="entry name" value="Ribosomal_L7_L12"/>
    <property type="match status" value="1"/>
</dbReference>
<dbReference type="FunFam" id="3.30.1390.10:FF:000001">
    <property type="entry name" value="50S ribosomal protein L7/L12"/>
    <property type="match status" value="1"/>
</dbReference>
<dbReference type="Gene3D" id="3.30.1390.10">
    <property type="match status" value="1"/>
</dbReference>
<dbReference type="Gene3D" id="1.20.5.710">
    <property type="entry name" value="Single helix bin"/>
    <property type="match status" value="1"/>
</dbReference>
<dbReference type="HAMAP" id="MF_00368">
    <property type="entry name" value="Ribosomal_bL12"/>
    <property type="match status" value="1"/>
</dbReference>
<dbReference type="InterPro" id="IPR000206">
    <property type="entry name" value="Ribosomal_bL12"/>
</dbReference>
<dbReference type="InterPro" id="IPR013823">
    <property type="entry name" value="Ribosomal_bL12_C"/>
</dbReference>
<dbReference type="InterPro" id="IPR014719">
    <property type="entry name" value="Ribosomal_bL12_C/ClpS-like"/>
</dbReference>
<dbReference type="InterPro" id="IPR008932">
    <property type="entry name" value="Ribosomal_bL12_oligo"/>
</dbReference>
<dbReference type="InterPro" id="IPR036235">
    <property type="entry name" value="Ribosomal_bL12_oligo_N_sf"/>
</dbReference>
<dbReference type="NCBIfam" id="TIGR00855">
    <property type="entry name" value="L12"/>
    <property type="match status" value="1"/>
</dbReference>
<dbReference type="PANTHER" id="PTHR45987">
    <property type="entry name" value="39S RIBOSOMAL PROTEIN L12"/>
    <property type="match status" value="1"/>
</dbReference>
<dbReference type="PANTHER" id="PTHR45987:SF4">
    <property type="entry name" value="LARGE RIBOSOMAL SUBUNIT PROTEIN BL12M"/>
    <property type="match status" value="1"/>
</dbReference>
<dbReference type="Pfam" id="PF00542">
    <property type="entry name" value="Ribosomal_L12"/>
    <property type="match status" value="1"/>
</dbReference>
<dbReference type="Pfam" id="PF16320">
    <property type="entry name" value="Ribosomal_L12_N"/>
    <property type="match status" value="1"/>
</dbReference>
<dbReference type="SUPFAM" id="SSF54736">
    <property type="entry name" value="ClpS-like"/>
    <property type="match status" value="1"/>
</dbReference>
<dbReference type="SUPFAM" id="SSF48300">
    <property type="entry name" value="Ribosomal protein L7/12, oligomerisation (N-terminal) domain"/>
    <property type="match status" value="1"/>
</dbReference>
<name>RL7_RICB8</name>
<gene>
    <name evidence="1" type="primary">rplL</name>
    <name type="ordered locus">A1I_01510</name>
</gene>
<accession>A8GV23</accession>
<protein>
    <recommendedName>
        <fullName evidence="1">Large ribosomal subunit protein bL12</fullName>
    </recommendedName>
    <alternativeName>
        <fullName evidence="2">50S ribosomal protein L7/L12</fullName>
    </alternativeName>
</protein>
<proteinExistence type="inferred from homology"/>
<keyword id="KW-0687">Ribonucleoprotein</keyword>
<keyword id="KW-0689">Ribosomal protein</keyword>
<sequence>MADLAKIEEQLSSLTLMQAAELVKMLEEKWGVSAAAPVAVAAAAAPAAEAAAEKTDFEVVLASSGDKKVEVIKVVKEITGLGLIEAKKLVDEAPKPIKSNVKKAEAEEIKSKLEAAGAKVELK</sequence>
<feature type="chain" id="PRO_1000007075" description="Large ribosomal subunit protein bL12">
    <location>
        <begin position="1"/>
        <end position="123"/>
    </location>
</feature>
<organism>
    <name type="scientific">Rickettsia bellii (strain OSU 85-389)</name>
    <dbReference type="NCBI Taxonomy" id="391896"/>
    <lineage>
        <taxon>Bacteria</taxon>
        <taxon>Pseudomonadati</taxon>
        <taxon>Pseudomonadota</taxon>
        <taxon>Alphaproteobacteria</taxon>
        <taxon>Rickettsiales</taxon>
        <taxon>Rickettsiaceae</taxon>
        <taxon>Rickettsieae</taxon>
        <taxon>Rickettsia</taxon>
        <taxon>belli group</taxon>
    </lineage>
</organism>
<reference key="1">
    <citation type="submission" date="2007-09" db="EMBL/GenBank/DDBJ databases">
        <title>Complete genome sequencing of Rickettsia bellii.</title>
        <authorList>
            <person name="Madan A."/>
            <person name="Lee H."/>
            <person name="Madan A."/>
            <person name="Yoon J.-G."/>
            <person name="Ryu G.-Y."/>
            <person name="Dasch G."/>
            <person name="Ereemeva M."/>
        </authorList>
    </citation>
    <scope>NUCLEOTIDE SEQUENCE [LARGE SCALE GENOMIC DNA]</scope>
    <source>
        <strain>OSU 85-389</strain>
    </source>
</reference>
<evidence type="ECO:0000255" key="1">
    <source>
        <dbReference type="HAMAP-Rule" id="MF_00368"/>
    </source>
</evidence>
<evidence type="ECO:0000305" key="2"/>
<comment type="function">
    <text evidence="1">Forms part of the ribosomal stalk which helps the ribosome interact with GTP-bound translation factors. Is thus essential for accurate translation.</text>
</comment>
<comment type="subunit">
    <text evidence="1">Homodimer. Part of the ribosomal stalk of the 50S ribosomal subunit. Forms a multimeric L10(L12)X complex, where L10 forms an elongated spine to which 2 to 4 L12 dimers bind in a sequential fashion. Binds GTP-bound translation factors.</text>
</comment>
<comment type="similarity">
    <text evidence="1">Belongs to the bacterial ribosomal protein bL12 family.</text>
</comment>